<comment type="function">
    <text evidence="1">Negative regulator of FtsZ ring formation; modulates the frequency and position of FtsZ ring formation. Inhibits FtsZ ring formation at polar sites. Interacts either with FtsZ or with one of its binding partners to promote depolymerization.</text>
</comment>
<comment type="subcellular location">
    <subcellularLocation>
        <location evidence="1">Cell membrane</location>
        <topology evidence="1">Single-pass membrane protein</topology>
    </subcellularLocation>
    <text evidence="1">Colocalized with FtsZ to the nascent septal site.</text>
</comment>
<comment type="similarity">
    <text evidence="1">Belongs to the EzrA family.</text>
</comment>
<name>EZRA_STRPF</name>
<gene>
    <name evidence="1" type="primary">ezrA</name>
    <name type="ordered locus">MGAS10750_Spy0637</name>
</gene>
<protein>
    <recommendedName>
        <fullName evidence="1">Septation ring formation regulator EzrA</fullName>
    </recommendedName>
</protein>
<reference key="1">
    <citation type="journal article" date="2006" name="Proc. Natl. Acad. Sci. U.S.A.">
        <title>Molecular genetic anatomy of inter- and intraserotype variation in the human bacterial pathogen group A Streptococcus.</title>
        <authorList>
            <person name="Beres S.B."/>
            <person name="Richter E.W."/>
            <person name="Nagiec M.J."/>
            <person name="Sumby P."/>
            <person name="Porcella S.F."/>
            <person name="DeLeo F.R."/>
            <person name="Musser J.M."/>
        </authorList>
    </citation>
    <scope>NUCLEOTIDE SEQUENCE [LARGE SCALE GENOMIC DNA]</scope>
    <source>
        <strain>MGAS10750</strain>
    </source>
</reference>
<dbReference type="EMBL" id="CP000262">
    <property type="protein sequence ID" value="ABF37587.1"/>
    <property type="molecule type" value="Genomic_DNA"/>
</dbReference>
<dbReference type="SMR" id="Q1J7I7"/>
<dbReference type="KEGG" id="spi:MGAS10750_Spy0637"/>
<dbReference type="HOGENOM" id="CLU_034079_2_0_9"/>
<dbReference type="Proteomes" id="UP000002434">
    <property type="component" value="Chromosome"/>
</dbReference>
<dbReference type="GO" id="GO:0005886">
    <property type="term" value="C:plasma membrane"/>
    <property type="evidence" value="ECO:0007669"/>
    <property type="project" value="UniProtKB-SubCell"/>
</dbReference>
<dbReference type="GO" id="GO:0005940">
    <property type="term" value="C:septin ring"/>
    <property type="evidence" value="ECO:0007669"/>
    <property type="project" value="InterPro"/>
</dbReference>
<dbReference type="GO" id="GO:0000917">
    <property type="term" value="P:division septum assembly"/>
    <property type="evidence" value="ECO:0007669"/>
    <property type="project" value="UniProtKB-KW"/>
</dbReference>
<dbReference type="GO" id="GO:0000921">
    <property type="term" value="P:septin ring assembly"/>
    <property type="evidence" value="ECO:0007669"/>
    <property type="project" value="InterPro"/>
</dbReference>
<dbReference type="HAMAP" id="MF_00728">
    <property type="entry name" value="EzrA"/>
    <property type="match status" value="1"/>
</dbReference>
<dbReference type="InterPro" id="IPR010379">
    <property type="entry name" value="EzrA"/>
</dbReference>
<dbReference type="NCBIfam" id="NF003407">
    <property type="entry name" value="PRK04778.1-1"/>
    <property type="match status" value="1"/>
</dbReference>
<dbReference type="NCBIfam" id="NF003410">
    <property type="entry name" value="PRK04778.1-4"/>
    <property type="match status" value="1"/>
</dbReference>
<dbReference type="Pfam" id="PF06160">
    <property type="entry name" value="EzrA"/>
    <property type="match status" value="1"/>
</dbReference>
<proteinExistence type="inferred from homology"/>
<accession>Q1J7I7</accession>
<evidence type="ECO:0000255" key="1">
    <source>
        <dbReference type="HAMAP-Rule" id="MF_00728"/>
    </source>
</evidence>
<sequence length="574" mass="66043">MSSGIILLIVAIVLLVIIAYLVGVIIRKRNDSLITSLEERKQALFALPVNDEIEEVKSLHLIGQSQTSFREWNQKWVDLTVNSFADIENHIFEAENLNDTFNFIRAKHEINSVESQLNLVEEDIASIREALNILKEQEEKNSARVTHALDLYEKLQASISENEDNFGSTMPEIDKQMKNIETEFSQFVALNSSGDPVEASEVLDRAEEHTIALGQITEQIPAIVAKLEDDFPDQLDDLETGYRRLLEENYHFPEKNIEARFQEIRESIRANSSELVTLDLDRAREENTHIQERIDSLYEVFEREIAAYKVAAKNSKMLPRYLAHVKHNNEQLKDEIARLSRKYILSETESLTVKAFEKDIKEIEDSTLAVAEQFGLQEKPFSELQVTFERSIKTLTNVESGQMDVFAAVKDIEKIESQARHNLDVYVTQLHMIKRYMEKRHLPGIPQDFLSAFFTTSSQLEALMDELSRGRINIEAVSRLSEVATVAIANLEDLTYQVVQNATLTEQLLQYSNRYRSFEAGVQSSFEHALRLFEVENDYQASFDEISYALETVEPGVTDRFVNSYEKTREHIRF</sequence>
<organism>
    <name type="scientific">Streptococcus pyogenes serotype M4 (strain MGAS10750)</name>
    <dbReference type="NCBI Taxonomy" id="370554"/>
    <lineage>
        <taxon>Bacteria</taxon>
        <taxon>Bacillati</taxon>
        <taxon>Bacillota</taxon>
        <taxon>Bacilli</taxon>
        <taxon>Lactobacillales</taxon>
        <taxon>Streptococcaceae</taxon>
        <taxon>Streptococcus</taxon>
    </lineage>
</organism>
<keyword id="KW-0131">Cell cycle</keyword>
<keyword id="KW-0132">Cell division</keyword>
<keyword id="KW-1003">Cell membrane</keyword>
<keyword id="KW-0175">Coiled coil</keyword>
<keyword id="KW-0472">Membrane</keyword>
<keyword id="KW-0717">Septation</keyword>
<keyword id="KW-0812">Transmembrane</keyword>
<keyword id="KW-1133">Transmembrane helix</keyword>
<feature type="chain" id="PRO_1000045910" description="Septation ring formation regulator EzrA">
    <location>
        <begin position="1"/>
        <end position="574"/>
    </location>
</feature>
<feature type="topological domain" description="Extracellular" evidence="1">
    <location>
        <begin position="1"/>
        <end position="7"/>
    </location>
</feature>
<feature type="transmembrane region" description="Helical" evidence="1">
    <location>
        <begin position="8"/>
        <end position="26"/>
    </location>
</feature>
<feature type="topological domain" description="Cytoplasmic" evidence="1">
    <location>
        <begin position="27"/>
        <end position="574"/>
    </location>
</feature>
<feature type="coiled-coil region" evidence="1">
    <location>
        <begin position="102"/>
        <end position="141"/>
    </location>
</feature>
<feature type="coiled-coil region" evidence="1">
    <location>
        <begin position="274"/>
        <end position="350"/>
    </location>
</feature>
<feature type="coiled-coil region" evidence="1">
    <location>
        <begin position="459"/>
        <end position="520"/>
    </location>
</feature>